<proteinExistence type="evidence at protein level"/>
<accession>P0DKD5</accession>
<accession>A4GCR3</accession>
<organism>
    <name type="scientific">Olea europaea</name>
    <name type="common">Common olive</name>
    <dbReference type="NCBI Taxonomy" id="4146"/>
    <lineage>
        <taxon>Eukaryota</taxon>
        <taxon>Viridiplantae</taxon>
        <taxon>Streptophyta</taxon>
        <taxon>Embryophyta</taxon>
        <taxon>Tracheophyta</taxon>
        <taxon>Spermatophyta</taxon>
        <taxon>Magnoliopsida</taxon>
        <taxon>eudicotyledons</taxon>
        <taxon>Gunneridae</taxon>
        <taxon>Pentapetalae</taxon>
        <taxon>asterids</taxon>
        <taxon>lamiids</taxon>
        <taxon>Lamiales</taxon>
        <taxon>Oleaceae</taxon>
        <taxon>Oleeae</taxon>
        <taxon>Olea</taxon>
    </lineage>
</organism>
<comment type="function">
    <text evidence="1">Binds to actin and affects the structure of the cytoskeleton. At high concentrations, profilin prevents the polymerization of actin, whereas it enhances it at low concentrations (By similarity).</text>
</comment>
<comment type="subunit">
    <text evidence="1">Occurs in many kinds of cells as a complex with monomeric actin in a 1:1 ratio.</text>
</comment>
<comment type="subcellular location">
    <subcellularLocation>
        <location evidence="1">Cytoplasm</location>
        <location evidence="1">Cytoskeleton</location>
    </subcellularLocation>
</comment>
<comment type="PTM">
    <text evidence="1">Phosphorylated by MAP kinases.</text>
</comment>
<comment type="polymorphism">
    <text>Several isoforms of the allergen exist due to polymorphism.</text>
</comment>
<comment type="allergen">
    <text>Causes an allergic reaction in human.</text>
</comment>
<comment type="miscellaneous">
    <text evidence="3">The variability of the residues taking part of IgE-binding epitopes might be responsible of the difference in cross-reactivity among olive pollen cultivars, and between distantly related pollen species, leading to a variable range of allergy reactions among atopic patients.</text>
</comment>
<comment type="similarity">
    <text evidence="2">Belongs to the profilin family.</text>
</comment>
<keyword id="KW-0009">Actin-binding</keyword>
<keyword id="KW-0020">Allergen</keyword>
<keyword id="KW-0963">Cytoplasm</keyword>
<keyword id="KW-0206">Cytoskeleton</keyword>
<keyword id="KW-1015">Disulfide bond</keyword>
<keyword id="KW-0597">Phosphoprotein</keyword>
<dbReference type="EMBL" id="DQ138342">
    <property type="protein sequence ID" value="AAZ30420.1"/>
    <property type="molecule type" value="mRNA"/>
</dbReference>
<dbReference type="EMBL" id="DQ138343">
    <property type="protein sequence ID" value="AAZ30421.1"/>
    <property type="molecule type" value="mRNA"/>
</dbReference>
<dbReference type="SMR" id="P0DKD5"/>
<dbReference type="GO" id="GO:0005938">
    <property type="term" value="C:cell cortex"/>
    <property type="evidence" value="ECO:0007669"/>
    <property type="project" value="TreeGrafter"/>
</dbReference>
<dbReference type="GO" id="GO:0005856">
    <property type="term" value="C:cytoskeleton"/>
    <property type="evidence" value="ECO:0007669"/>
    <property type="project" value="UniProtKB-SubCell"/>
</dbReference>
<dbReference type="GO" id="GO:0003785">
    <property type="term" value="F:actin monomer binding"/>
    <property type="evidence" value="ECO:0007669"/>
    <property type="project" value="TreeGrafter"/>
</dbReference>
<dbReference type="CDD" id="cd00148">
    <property type="entry name" value="PROF"/>
    <property type="match status" value="1"/>
</dbReference>
<dbReference type="FunFam" id="3.30.450.30:FF:000001">
    <property type="entry name" value="Profilin"/>
    <property type="match status" value="1"/>
</dbReference>
<dbReference type="Gene3D" id="3.30.450.30">
    <property type="entry name" value="Dynein light chain 2a, cytoplasmic"/>
    <property type="match status" value="1"/>
</dbReference>
<dbReference type="InterPro" id="IPR048278">
    <property type="entry name" value="PFN"/>
</dbReference>
<dbReference type="InterPro" id="IPR005455">
    <property type="entry name" value="PFN_euk"/>
</dbReference>
<dbReference type="InterPro" id="IPR036140">
    <property type="entry name" value="PFN_sf"/>
</dbReference>
<dbReference type="InterPro" id="IPR027310">
    <property type="entry name" value="Profilin_CS"/>
</dbReference>
<dbReference type="PANTHER" id="PTHR11604">
    <property type="entry name" value="PROFILIN"/>
    <property type="match status" value="1"/>
</dbReference>
<dbReference type="PANTHER" id="PTHR11604:SF25">
    <property type="entry name" value="PROFILIN-5"/>
    <property type="match status" value="1"/>
</dbReference>
<dbReference type="Pfam" id="PF00235">
    <property type="entry name" value="Profilin"/>
    <property type="match status" value="1"/>
</dbReference>
<dbReference type="PRINTS" id="PR00392">
    <property type="entry name" value="PROFILIN"/>
</dbReference>
<dbReference type="PRINTS" id="PR01640">
    <property type="entry name" value="PROFILINPLNT"/>
</dbReference>
<dbReference type="SMART" id="SM00392">
    <property type="entry name" value="PROF"/>
    <property type="match status" value="1"/>
</dbReference>
<dbReference type="SUPFAM" id="SSF55770">
    <property type="entry name" value="Profilin (actin-binding protein)"/>
    <property type="match status" value="1"/>
</dbReference>
<dbReference type="PROSITE" id="PS00414">
    <property type="entry name" value="PROFILIN"/>
    <property type="match status" value="1"/>
</dbReference>
<reference key="1">
    <citation type="journal article" date="2012" name="PLoS ONE">
        <title>Characterization of profilin polymorphism in pollen with a focus on multifunctionality.</title>
        <authorList>
            <person name="Jimenez-Lopez J.C."/>
            <person name="Morales S."/>
            <person name="Castro A.J."/>
            <person name="Volkmann D."/>
            <person name="Rodriguez-Garcia M.I."/>
            <person name="Alche Jde D."/>
        </authorList>
    </citation>
    <scope>NUCLEOTIDE SEQUENCE [MRNA]</scope>
    <scope>POLYMORPHISM</scope>
    <source>
        <strain>cv. Empeltre</strain>
        <tissue>Pollen</tissue>
    </source>
</reference>
<reference key="2">
    <citation type="journal article" date="2013" name="PLoS ONE">
        <title>Analysis of the effects of polymorphism on pollen profilin structural functionality and the generation of conformational, T- and B-cell epitopes.</title>
        <authorList>
            <person name="Jimenez-Lopez J.C."/>
            <person name="Rodriguez-Garcia M.I."/>
            <person name="Alche J.D."/>
        </authorList>
    </citation>
    <scope>3D-STRUCTURE MODELING</scope>
    <scope>DISULFIDE BOND</scope>
</reference>
<feature type="initiator methionine" description="Removed" evidence="1">
    <location>
        <position position="1"/>
    </location>
</feature>
<feature type="chain" id="PRO_0000424976" description="Profilin-1">
    <location>
        <begin position="2"/>
        <end position="134"/>
    </location>
</feature>
<feature type="short sequence motif" description="Involved in PIP2 interaction">
    <location>
        <begin position="84"/>
        <end position="100"/>
    </location>
</feature>
<feature type="modified residue" description="Phosphothreonine" evidence="1">
    <location>
        <position position="114"/>
    </location>
</feature>
<feature type="disulfide bond" evidence="3">
    <location>
        <begin position="13"/>
        <end position="118"/>
    </location>
</feature>
<name>PROFK_OLEEU</name>
<evidence type="ECO:0000250" key="1"/>
<evidence type="ECO:0000305" key="2"/>
<evidence type="ECO:0000305" key="3">
    <source>
    </source>
</evidence>
<sequence length="134" mass="14427">MSWQAYVDDHLMCDIEGHEGHRLTAAAIVGHDGSVWAQSATFPQFKPEEMNGIMTDFNEPGHLAPTGLHLGGTKYMVIQGEAGAVIRGKKGSGGITIKKTGQALVFGIYEEPVTPGQCNMVVERLGDYLLEQGL</sequence>
<protein>
    <recommendedName>
        <fullName>Profilin-1</fullName>
    </recommendedName>
    <alternativeName>
        <fullName>Pollen allergen Ole e 2</fullName>
    </alternativeName>
    <allergenName>Ole e 2</allergenName>
</protein>